<protein>
    <recommendedName>
        <fullName evidence="1">Nucleoside triphosphate pyrophosphatase</fullName>
        <ecNumber evidence="1">3.6.1.9</ecNumber>
    </recommendedName>
    <alternativeName>
        <fullName evidence="1">Nucleotide pyrophosphatase</fullName>
        <shortName evidence="1">Nucleotide PPase</shortName>
    </alternativeName>
</protein>
<evidence type="ECO:0000255" key="1">
    <source>
        <dbReference type="HAMAP-Rule" id="MF_00528"/>
    </source>
</evidence>
<proteinExistence type="inferred from homology"/>
<reference key="1">
    <citation type="journal article" date="2004" name="Nat. Genet.">
        <title>Evidence in the Legionella pneumophila genome for exploitation of host cell functions and high genome plasticity.</title>
        <authorList>
            <person name="Cazalet C."/>
            <person name="Rusniok C."/>
            <person name="Brueggemann H."/>
            <person name="Zidane N."/>
            <person name="Magnier A."/>
            <person name="Ma L."/>
            <person name="Tichit M."/>
            <person name="Jarraud S."/>
            <person name="Bouchier C."/>
            <person name="Vandenesch F."/>
            <person name="Kunst F."/>
            <person name="Etienne J."/>
            <person name="Glaser P."/>
            <person name="Buchrieser C."/>
        </authorList>
    </citation>
    <scope>NUCLEOTIDE SEQUENCE [LARGE SCALE GENOMIC DNA]</scope>
    <source>
        <strain>Lens</strain>
    </source>
</reference>
<comment type="function">
    <text evidence="1">Nucleoside triphosphate pyrophosphatase. May have a dual role in cell division arrest and in preventing the incorporation of modified nucleotides into cellular nucleic acids.</text>
</comment>
<comment type="catalytic activity">
    <reaction evidence="1">
        <text>a ribonucleoside 5'-triphosphate + H2O = a ribonucleoside 5'-phosphate + diphosphate + H(+)</text>
        <dbReference type="Rhea" id="RHEA:23996"/>
        <dbReference type="ChEBI" id="CHEBI:15377"/>
        <dbReference type="ChEBI" id="CHEBI:15378"/>
        <dbReference type="ChEBI" id="CHEBI:33019"/>
        <dbReference type="ChEBI" id="CHEBI:58043"/>
        <dbReference type="ChEBI" id="CHEBI:61557"/>
        <dbReference type="EC" id="3.6.1.9"/>
    </reaction>
</comment>
<comment type="catalytic activity">
    <reaction evidence="1">
        <text>a 2'-deoxyribonucleoside 5'-triphosphate + H2O = a 2'-deoxyribonucleoside 5'-phosphate + diphosphate + H(+)</text>
        <dbReference type="Rhea" id="RHEA:44644"/>
        <dbReference type="ChEBI" id="CHEBI:15377"/>
        <dbReference type="ChEBI" id="CHEBI:15378"/>
        <dbReference type="ChEBI" id="CHEBI:33019"/>
        <dbReference type="ChEBI" id="CHEBI:61560"/>
        <dbReference type="ChEBI" id="CHEBI:65317"/>
        <dbReference type="EC" id="3.6.1.9"/>
    </reaction>
</comment>
<comment type="cofactor">
    <cofactor evidence="1">
        <name>a divalent metal cation</name>
        <dbReference type="ChEBI" id="CHEBI:60240"/>
    </cofactor>
</comment>
<comment type="subcellular location">
    <subcellularLocation>
        <location evidence="1">Cytoplasm</location>
    </subcellularLocation>
</comment>
<comment type="similarity">
    <text evidence="1">Belongs to the Maf family.</text>
</comment>
<gene>
    <name type="ordered locus">lpl2014</name>
</gene>
<name>NTPP_LEGPL</name>
<sequence length="200" mass="22598">MSKFLQQKPIILASSSTIRHKLMKSLGLDFLVVPSNCNEEEIKTRHNSDELVKLGITLAKIKALDVSQHYPEHYIIAADQLCIADKRVFNKPLNHQTAVSHLRELSGKQHQQIACLCIVKESKILWQYHETATLTLHHLSEKTIEAYLQAEKPYQSCGAYQYEGLGKWLFKEVQGSEDTILGLPLMPLVNALVNLKVVGI</sequence>
<accession>Q5WV03</accession>
<keyword id="KW-0963">Cytoplasm</keyword>
<keyword id="KW-0378">Hydrolase</keyword>
<keyword id="KW-0546">Nucleotide metabolism</keyword>
<organism>
    <name type="scientific">Legionella pneumophila (strain Lens)</name>
    <dbReference type="NCBI Taxonomy" id="297245"/>
    <lineage>
        <taxon>Bacteria</taxon>
        <taxon>Pseudomonadati</taxon>
        <taxon>Pseudomonadota</taxon>
        <taxon>Gammaproteobacteria</taxon>
        <taxon>Legionellales</taxon>
        <taxon>Legionellaceae</taxon>
        <taxon>Legionella</taxon>
    </lineage>
</organism>
<dbReference type="EC" id="3.6.1.9" evidence="1"/>
<dbReference type="EMBL" id="CR628337">
    <property type="protein sequence ID" value="CAH16254.1"/>
    <property type="molecule type" value="Genomic_DNA"/>
</dbReference>
<dbReference type="RefSeq" id="WP_011215996.1">
    <property type="nucleotide sequence ID" value="NC_006369.1"/>
</dbReference>
<dbReference type="SMR" id="Q5WV03"/>
<dbReference type="KEGG" id="lpf:lpl2014"/>
<dbReference type="LegioList" id="lpl2014"/>
<dbReference type="HOGENOM" id="CLU_040416_1_1_6"/>
<dbReference type="Proteomes" id="UP000002517">
    <property type="component" value="Chromosome"/>
</dbReference>
<dbReference type="GO" id="GO:0005737">
    <property type="term" value="C:cytoplasm"/>
    <property type="evidence" value="ECO:0007669"/>
    <property type="project" value="UniProtKB-SubCell"/>
</dbReference>
<dbReference type="GO" id="GO:0047429">
    <property type="term" value="F:nucleoside triphosphate diphosphatase activity"/>
    <property type="evidence" value="ECO:0007669"/>
    <property type="project" value="UniProtKB-EC"/>
</dbReference>
<dbReference type="GO" id="GO:0009117">
    <property type="term" value="P:nucleotide metabolic process"/>
    <property type="evidence" value="ECO:0007669"/>
    <property type="project" value="UniProtKB-KW"/>
</dbReference>
<dbReference type="CDD" id="cd00555">
    <property type="entry name" value="Maf"/>
    <property type="match status" value="1"/>
</dbReference>
<dbReference type="Gene3D" id="3.90.950.10">
    <property type="match status" value="1"/>
</dbReference>
<dbReference type="HAMAP" id="MF_00528">
    <property type="entry name" value="Maf"/>
    <property type="match status" value="1"/>
</dbReference>
<dbReference type="InterPro" id="IPR029001">
    <property type="entry name" value="ITPase-like_fam"/>
</dbReference>
<dbReference type="InterPro" id="IPR003697">
    <property type="entry name" value="Maf-like"/>
</dbReference>
<dbReference type="NCBIfam" id="TIGR00172">
    <property type="entry name" value="maf"/>
    <property type="match status" value="1"/>
</dbReference>
<dbReference type="PANTHER" id="PTHR43213">
    <property type="entry name" value="BIFUNCTIONAL DTTP/UTP PYROPHOSPHATASE/METHYLTRANSFERASE PROTEIN-RELATED"/>
    <property type="match status" value="1"/>
</dbReference>
<dbReference type="PANTHER" id="PTHR43213:SF5">
    <property type="entry name" value="BIFUNCTIONAL DTTP_UTP PYROPHOSPHATASE_METHYLTRANSFERASE PROTEIN-RELATED"/>
    <property type="match status" value="1"/>
</dbReference>
<dbReference type="Pfam" id="PF02545">
    <property type="entry name" value="Maf"/>
    <property type="match status" value="1"/>
</dbReference>
<dbReference type="PIRSF" id="PIRSF006305">
    <property type="entry name" value="Maf"/>
    <property type="match status" value="1"/>
</dbReference>
<dbReference type="SUPFAM" id="SSF52972">
    <property type="entry name" value="ITPase-like"/>
    <property type="match status" value="1"/>
</dbReference>
<feature type="chain" id="PRO_0000267329" description="Nucleoside triphosphate pyrophosphatase">
    <location>
        <begin position="1"/>
        <end position="200"/>
    </location>
</feature>
<feature type="active site" description="Proton acceptor" evidence="1">
    <location>
        <position position="79"/>
    </location>
</feature>